<dbReference type="EMBL" id="BC111624">
    <property type="protein sequence ID" value="AAI11625.1"/>
    <property type="molecule type" value="mRNA"/>
</dbReference>
<dbReference type="RefSeq" id="NP_001070546.1">
    <property type="nucleotide sequence ID" value="NM_001077078.2"/>
</dbReference>
<dbReference type="SMR" id="Q2M2T9"/>
<dbReference type="FunCoup" id="Q2M2T9">
    <property type="interactions" value="2"/>
</dbReference>
<dbReference type="STRING" id="9913.ENSBTAP00000007813"/>
<dbReference type="PaxDb" id="9913-ENSBTAP00000007813"/>
<dbReference type="Ensembl" id="ENSBTAT00000007813.6">
    <property type="protein sequence ID" value="ENSBTAP00000007813.6"/>
    <property type="gene ID" value="ENSBTAG00000005954.6"/>
</dbReference>
<dbReference type="GeneID" id="768019"/>
<dbReference type="KEGG" id="bta:768019"/>
<dbReference type="CTD" id="145645"/>
<dbReference type="VEuPathDB" id="HostDB:ENSBTAG00000005954"/>
<dbReference type="VGNC" id="VGNC:55147">
    <property type="gene designation" value="TERB2"/>
</dbReference>
<dbReference type="eggNOG" id="ENOG502S1BT">
    <property type="taxonomic scope" value="Eukaryota"/>
</dbReference>
<dbReference type="GeneTree" id="ENSGT00390000012336"/>
<dbReference type="InParanoid" id="Q2M2T9"/>
<dbReference type="OMA" id="WFCRSVS"/>
<dbReference type="OrthoDB" id="5278943at2759"/>
<dbReference type="Proteomes" id="UP000009136">
    <property type="component" value="Chromosome 10"/>
</dbReference>
<dbReference type="Bgee" id="ENSBTAG00000005954">
    <property type="expression patterns" value="Expressed in semen and 11 other cell types or tissues"/>
</dbReference>
<dbReference type="GO" id="GO:0000781">
    <property type="term" value="C:chromosome, telomeric region"/>
    <property type="evidence" value="ECO:0000250"/>
    <property type="project" value="UniProtKB"/>
</dbReference>
<dbReference type="GO" id="GO:0005637">
    <property type="term" value="C:nuclear inner membrane"/>
    <property type="evidence" value="ECO:0000250"/>
    <property type="project" value="UniProtKB"/>
</dbReference>
<dbReference type="GO" id="GO:0007129">
    <property type="term" value="P:homologous chromosome pairing at meiosis"/>
    <property type="evidence" value="ECO:0000250"/>
    <property type="project" value="UniProtKB"/>
</dbReference>
<dbReference type="GO" id="GO:0070197">
    <property type="term" value="P:meiotic attachment of telomere to nuclear envelope"/>
    <property type="evidence" value="ECO:0000250"/>
    <property type="project" value="UniProtKB"/>
</dbReference>
<dbReference type="GO" id="GO:0045141">
    <property type="term" value="P:meiotic telomere clustering"/>
    <property type="evidence" value="ECO:0000250"/>
    <property type="project" value="UniProtKB"/>
</dbReference>
<dbReference type="InterPro" id="IPR028065">
    <property type="entry name" value="TERB2"/>
</dbReference>
<dbReference type="PANTHER" id="PTHR35345">
    <property type="entry name" value="TELOMERE REPEATS-BINDING BOUQUET FORMATION PROTEIN 2"/>
    <property type="match status" value="1"/>
</dbReference>
<dbReference type="PANTHER" id="PTHR35345:SF1">
    <property type="entry name" value="TELOMERE REPEATS-BINDING BOUQUET FORMATION PROTEIN 2"/>
    <property type="match status" value="1"/>
</dbReference>
<dbReference type="Pfam" id="PF15101">
    <property type="entry name" value="TERB2"/>
    <property type="match status" value="1"/>
</dbReference>
<accession>Q2M2T9</accession>
<name>TERB2_BOVIN</name>
<comment type="function">
    <text evidence="1">Meiosis-specific telomere-associated protein involved in meiotic telomere attachment to the nucleus inner membrane, a crucial step for homologous pairing and synapsis. Component of the MAJIN-TERB1-TERB2 complex, which promotes telomere cap exchange by mediating attachment of telomeric DNA to the inner nuclear membrane and replacement of the protective cap of telomeric chromosomes: in early meiosis, the MAJIN-TERB1-TERB2 complex associates with telomeric DNA and the shelterin/telosome complex. During prophase, the complex matures and promotes release of the shelterin/telosome complex from telomeric DNA.</text>
</comment>
<comment type="subunit">
    <text evidence="1">Component of the MAJIN-TERB1-TERB2 complex, composed of MAJIN, TERB1 and TERB2.</text>
</comment>
<comment type="subcellular location">
    <subcellularLocation>
        <location evidence="1">Chromosome</location>
        <location evidence="1">Telomere</location>
    </subcellularLocation>
    <subcellularLocation>
        <location evidence="1">Nucleus inner membrane</location>
    </subcellularLocation>
    <text evidence="1">Localizes to telomeres throughout meiotic prophase I and disappears in metaphase I. In leptotene spermatocytes, localizes to telomeres that localize to the nucleus inner membrane.</text>
</comment>
<comment type="similarity">
    <text evidence="2">Belongs to the TERB2 family.</text>
</comment>
<evidence type="ECO:0000250" key="1">
    <source>
        <dbReference type="UniProtKB" id="Q9D494"/>
    </source>
</evidence>
<evidence type="ECO:0000305" key="2"/>
<sequence>MFQGQRGWFCGSVSHDLRQFWVAEGGTISDPRAADFLFSCDASHPDTLRIYQSLDYIEDNATVFHAYYLSAVANAEIKNSVALGHFILPPASLQKEIRRKIGSFIWEQDQHFLIEKHDEVTSNELKVFRESSVLATDHKKDLSKSTEKHFIRTPVVEKQMYFPLQHYPVNNMVTGYISIDAMKKFLGELHDFIPGSSGYLAYHVQNEINMSAIKNKLKNKY</sequence>
<organism>
    <name type="scientific">Bos taurus</name>
    <name type="common">Bovine</name>
    <dbReference type="NCBI Taxonomy" id="9913"/>
    <lineage>
        <taxon>Eukaryota</taxon>
        <taxon>Metazoa</taxon>
        <taxon>Chordata</taxon>
        <taxon>Craniata</taxon>
        <taxon>Vertebrata</taxon>
        <taxon>Euteleostomi</taxon>
        <taxon>Mammalia</taxon>
        <taxon>Eutheria</taxon>
        <taxon>Laurasiatheria</taxon>
        <taxon>Artiodactyla</taxon>
        <taxon>Ruminantia</taxon>
        <taxon>Pecora</taxon>
        <taxon>Bovidae</taxon>
        <taxon>Bovinae</taxon>
        <taxon>Bos</taxon>
    </lineage>
</organism>
<feature type="chain" id="PRO_0000263716" description="Telomere repeats-binding bouquet formation protein 2">
    <location>
        <begin position="1"/>
        <end position="221"/>
    </location>
</feature>
<proteinExistence type="evidence at transcript level"/>
<reference key="1">
    <citation type="submission" date="2006-01" db="EMBL/GenBank/DDBJ databases">
        <authorList>
            <consortium name="NIH - Mammalian Gene Collection (MGC) project"/>
        </authorList>
    </citation>
    <scope>NUCLEOTIDE SEQUENCE [LARGE SCALE MRNA]</scope>
    <source>
        <strain>Hereford</strain>
        <tissue>Testis</tissue>
    </source>
</reference>
<protein>
    <recommendedName>
        <fullName evidence="1">Telomere repeats-binding bouquet formation protein 2</fullName>
    </recommendedName>
</protein>
<keyword id="KW-0158">Chromosome</keyword>
<keyword id="KW-0472">Membrane</keyword>
<keyword id="KW-0539">Nucleus</keyword>
<keyword id="KW-1185">Reference proteome</keyword>
<keyword id="KW-0779">Telomere</keyword>
<gene>
    <name evidence="1" type="primary">TERB2</name>
</gene>